<reference key="1">
    <citation type="submission" date="2003-04" db="EMBL/GenBank/DDBJ databases">
        <title>Cloning and sequence analysis of cytokine cDNAs of llama and camel.</title>
        <authorList>
            <person name="Raadan O."/>
            <person name="Lee S."/>
            <person name="Yoshida R."/>
            <person name="Chang K."/>
            <person name="Ohashi K."/>
            <person name="Sugimoto C."/>
            <person name="Onuma M."/>
        </authorList>
    </citation>
    <scope>NUCLEOTIDE SEQUENCE [MRNA]</scope>
</reference>
<feature type="signal peptide" evidence="4">
    <location>
        <begin position="1"/>
        <end position="18"/>
    </location>
</feature>
<feature type="chain" id="PRO_0000015361" description="Interleukin-10">
    <location>
        <begin position="19"/>
        <end position="178"/>
    </location>
</feature>
<feature type="glycosylation site" description="N-linked (GlcNAc...) asparagine" evidence="4">
    <location>
        <position position="134"/>
    </location>
</feature>
<feature type="disulfide bond" evidence="1">
    <location>
        <begin position="30"/>
        <end position="126"/>
    </location>
</feature>
<feature type="disulfide bond" evidence="1">
    <location>
        <begin position="80"/>
        <end position="132"/>
    </location>
</feature>
<sequence>MPRSALLCCLILLAGVAASRDQGTQSENSCAHFPASLPHMLRELRAAFGRVKTFFQMKDQLDNMLLTRSLLEDFKGYLGCQALSEMIQFYLEEVMPQAENHGPDIKEHVNSLGEKLKTLRLRLRRCHRFLPCENKSKAVEQVRGVFSKLQEKGVYKAMSEFDIFINYIEAYMTMKMKN</sequence>
<gene>
    <name type="primary">IL10</name>
</gene>
<evidence type="ECO:0000250" key="1"/>
<evidence type="ECO:0000250" key="2">
    <source>
        <dbReference type="UniProtKB" id="P18893"/>
    </source>
</evidence>
<evidence type="ECO:0000250" key="3">
    <source>
        <dbReference type="UniProtKB" id="P22301"/>
    </source>
</evidence>
<evidence type="ECO:0000255" key="4"/>
<evidence type="ECO:0000305" key="5"/>
<proteinExistence type="evidence at transcript level"/>
<organism>
    <name type="scientific">Lama glama</name>
    <name type="common">Llama</name>
    <dbReference type="NCBI Taxonomy" id="9844"/>
    <lineage>
        <taxon>Eukaryota</taxon>
        <taxon>Metazoa</taxon>
        <taxon>Chordata</taxon>
        <taxon>Craniata</taxon>
        <taxon>Vertebrata</taxon>
        <taxon>Euteleostomi</taxon>
        <taxon>Mammalia</taxon>
        <taxon>Eutheria</taxon>
        <taxon>Laurasiatheria</taxon>
        <taxon>Artiodactyla</taxon>
        <taxon>Tylopoda</taxon>
        <taxon>Camelidae</taxon>
        <taxon>Lama</taxon>
    </lineage>
</organism>
<dbReference type="EMBL" id="AB107649">
    <property type="protein sequence ID" value="BAC75386.1"/>
    <property type="molecule type" value="mRNA"/>
</dbReference>
<dbReference type="SMR" id="Q865X4"/>
<dbReference type="GlyCosmos" id="Q865X4">
    <property type="glycosylation" value="1 site, No reported glycans"/>
</dbReference>
<dbReference type="GO" id="GO:0005615">
    <property type="term" value="C:extracellular space"/>
    <property type="evidence" value="ECO:0000250"/>
    <property type="project" value="UniProtKB"/>
</dbReference>
<dbReference type="GO" id="GO:0005125">
    <property type="term" value="F:cytokine activity"/>
    <property type="evidence" value="ECO:0007669"/>
    <property type="project" value="UniProtKB-KW"/>
</dbReference>
<dbReference type="GO" id="GO:0006955">
    <property type="term" value="P:immune response"/>
    <property type="evidence" value="ECO:0007669"/>
    <property type="project" value="InterPro"/>
</dbReference>
<dbReference type="GO" id="GO:0030889">
    <property type="term" value="P:negative regulation of B cell proliferation"/>
    <property type="evidence" value="ECO:0000250"/>
    <property type="project" value="UniProtKB"/>
</dbReference>
<dbReference type="GO" id="GO:0002719">
    <property type="term" value="P:negative regulation of cytokine production involved in immune response"/>
    <property type="evidence" value="ECO:0000250"/>
    <property type="project" value="UniProtKB"/>
</dbReference>
<dbReference type="GO" id="GO:0050728">
    <property type="term" value="P:negative regulation of inflammatory response"/>
    <property type="evidence" value="ECO:0000250"/>
    <property type="project" value="UniProtKB"/>
</dbReference>
<dbReference type="GO" id="GO:0032715">
    <property type="term" value="P:negative regulation of interleukin-6 production"/>
    <property type="evidence" value="ECO:0000250"/>
    <property type="project" value="UniProtKB"/>
</dbReference>
<dbReference type="GO" id="GO:0051045">
    <property type="term" value="P:negative regulation of membrane protein ectodomain proteolysis"/>
    <property type="evidence" value="ECO:0000250"/>
    <property type="project" value="UniProtKB"/>
</dbReference>
<dbReference type="GO" id="GO:0002904">
    <property type="term" value="P:positive regulation of B cell apoptotic process"/>
    <property type="evidence" value="ECO:0000250"/>
    <property type="project" value="UniProtKB"/>
</dbReference>
<dbReference type="GO" id="GO:0001819">
    <property type="term" value="P:positive regulation of cytokine production"/>
    <property type="evidence" value="ECO:0000250"/>
    <property type="project" value="UniProtKB"/>
</dbReference>
<dbReference type="GO" id="GO:0051091">
    <property type="term" value="P:positive regulation of DNA-binding transcription factor activity"/>
    <property type="evidence" value="ECO:0000250"/>
    <property type="project" value="UniProtKB"/>
</dbReference>
<dbReference type="GO" id="GO:0045893">
    <property type="term" value="P:positive regulation of DNA-templated transcription"/>
    <property type="evidence" value="ECO:0000250"/>
    <property type="project" value="UniProtKB"/>
</dbReference>
<dbReference type="GO" id="GO:0051384">
    <property type="term" value="P:response to glucocorticoid"/>
    <property type="evidence" value="ECO:0000250"/>
    <property type="project" value="UniProtKB"/>
</dbReference>
<dbReference type="GO" id="GO:0002237">
    <property type="term" value="P:response to molecule of bacterial origin"/>
    <property type="evidence" value="ECO:0000250"/>
    <property type="project" value="UniProtKB"/>
</dbReference>
<dbReference type="FunFam" id="1.20.1250.10:FF:000011">
    <property type="entry name" value="Interleukin-10"/>
    <property type="match status" value="1"/>
</dbReference>
<dbReference type="Gene3D" id="1.20.1250.10">
    <property type="match status" value="1"/>
</dbReference>
<dbReference type="InterPro" id="IPR009079">
    <property type="entry name" value="4_helix_cytokine-like_core"/>
</dbReference>
<dbReference type="InterPro" id="IPR000098">
    <property type="entry name" value="IL-10"/>
</dbReference>
<dbReference type="InterPro" id="IPR020443">
    <property type="entry name" value="IL-10/19/20/24/26"/>
</dbReference>
<dbReference type="InterPro" id="IPR020423">
    <property type="entry name" value="IL-10_CS"/>
</dbReference>
<dbReference type="PANTHER" id="PTHR48482:SF5">
    <property type="entry name" value="INTERLEUKIN-10"/>
    <property type="match status" value="1"/>
</dbReference>
<dbReference type="PANTHER" id="PTHR48482">
    <property type="entry name" value="INTERLEUKIN-19-RELATED"/>
    <property type="match status" value="1"/>
</dbReference>
<dbReference type="Pfam" id="PF00726">
    <property type="entry name" value="IL10"/>
    <property type="match status" value="1"/>
</dbReference>
<dbReference type="PRINTS" id="PR01294">
    <property type="entry name" value="INTRLEUKIN10"/>
</dbReference>
<dbReference type="SMART" id="SM00188">
    <property type="entry name" value="IL10"/>
    <property type="match status" value="1"/>
</dbReference>
<dbReference type="SUPFAM" id="SSF47266">
    <property type="entry name" value="4-helical cytokines"/>
    <property type="match status" value="1"/>
</dbReference>
<dbReference type="PROSITE" id="PS00520">
    <property type="entry name" value="INTERLEUKIN_10"/>
    <property type="match status" value="1"/>
</dbReference>
<keyword id="KW-0202">Cytokine</keyword>
<keyword id="KW-1015">Disulfide bond</keyword>
<keyword id="KW-0325">Glycoprotein</keyword>
<keyword id="KW-0964">Secreted</keyword>
<keyword id="KW-0732">Signal</keyword>
<accession>Q865X4</accession>
<protein>
    <recommendedName>
        <fullName>Interleukin-10</fullName>
        <shortName>IL-10</shortName>
    </recommendedName>
    <alternativeName>
        <fullName>Cytokine synthesis inhibitory factor</fullName>
        <shortName>CSIF</shortName>
    </alternativeName>
</protein>
<name>IL10_LAMGL</name>
<comment type="function">
    <text evidence="2 3">Major immune regulatory cytokine that acts on many cells of the immune system where it has profound anti-inflammatory functions, limiting excessive tissue disruption caused by inflammation. Mechanistically, IL10 binds to its heterotetrameric receptor comprising IL10RA and IL10RB leading to JAK1 and STAT2-mediated phosphorylation of STAT3. In turn, STAT3 translocates to the nucleus where it drives expression of anti-inflammatory mediators. Targets antigen-presenting cells (APCs) such as macrophages and monocytes and inhibits their release of pro-inflammatory cytokines including granulocyte-macrophage colony-stimulating factor /GM-CSF, granulocyte colony-stimulating factor/G-CSF, IL-1 alpha, IL-1 beta, IL-6, IL-8 and TNF-alpha. Also interferes with antigen presentation by reducing the expression of MHC-class II and co-stimulatory molecules, thereby inhibiting their ability to induce T cell activation (By similarity). In addition, controls the inflammatory response of macrophages by reprogramming essential metabolic pathways including mTOR signaling (By similarity).</text>
</comment>
<comment type="subunit">
    <text evidence="3">Homodimer. Interacts with IL10RA and IL10RB.</text>
</comment>
<comment type="subcellular location">
    <subcellularLocation>
        <location evidence="3">Secreted</location>
    </subcellularLocation>
</comment>
<comment type="similarity">
    <text evidence="5">Belongs to the IL-10 family.</text>
</comment>